<reference key="1">
    <citation type="journal article" date="2003" name="Nature">
        <title>Genome divergence in two Prochlorococcus ecotypes reflects oceanic niche differentiation.</title>
        <authorList>
            <person name="Rocap G."/>
            <person name="Larimer F.W."/>
            <person name="Lamerdin J.E."/>
            <person name="Malfatti S."/>
            <person name="Chain P."/>
            <person name="Ahlgren N.A."/>
            <person name="Arellano A."/>
            <person name="Coleman M."/>
            <person name="Hauser L."/>
            <person name="Hess W.R."/>
            <person name="Johnson Z.I."/>
            <person name="Land M.L."/>
            <person name="Lindell D."/>
            <person name="Post A.F."/>
            <person name="Regala W."/>
            <person name="Shah M."/>
            <person name="Shaw S.L."/>
            <person name="Steglich C."/>
            <person name="Sullivan M.B."/>
            <person name="Ting C.S."/>
            <person name="Tolonen A."/>
            <person name="Webb E.A."/>
            <person name="Zinser E.R."/>
            <person name="Chisholm S.W."/>
        </authorList>
    </citation>
    <scope>NUCLEOTIDE SEQUENCE [LARGE SCALE GENOMIC DNA]</scope>
    <source>
        <strain>MIT 9313</strain>
    </source>
</reference>
<sequence length="679" mass="76869">MPKYHLKAPYSPKGDQPTAIARLVEGVNQGQRYQTLLGATGTGKTFTIANLIAQTGRPALVLAHNKTLAAQLCNEFREFFPDNSVEYFISYYDYYQPEAYVPVSDTYIAKTSSINEEIDMLRHSATRSLFERNDVIVVASISCIYGLGIPSEYLKAAVKFKVGETLNIRSALRELVENQYSRNDIDITRGRFRVRGDVLEIGPAYEDRLVRIELFGDEVEAIRYLDPTTGEILQSLEAINIYPAKHFVTPKERLNVAVQAIRDELRGRLQFLNEQGKLLEAQRLEQRTTYDLEMLREVGYCNGVENYARHLAGRSAGTPPECLIDYFPEDWLLVVDESHVTCSQLKAMYNGDQARKKVLIEHGFRLPSAADNRPLKSEEFWSKARQTVFVSATPGDWELKQSDGHLAEQVIRPTGVLDPLVEVRPTQGQVDDLLAEIRIRAEKQERVLITTLTKRMAEDLTDYLAENDVRVRYLHSEIHSIERIEIIQDLRLGEYDVLVGVNLLREGLDLPEVSLVVILDADKEGFLRAERSLIQTIGRAARHVDGMALLYADNLTDSMSRAISETERRREIQKAYNELNGIVPRPAGKRASNSILSFLELSRRLQTDGKDADLVQITGRAVDALDSDQDAGLALDALPELIDQLETKMKEAAKNLNFEEAASLRDRIKKFRQKLIRNT</sequence>
<keyword id="KW-0067">ATP-binding</keyword>
<keyword id="KW-0963">Cytoplasm</keyword>
<keyword id="KW-0227">DNA damage</keyword>
<keyword id="KW-0228">DNA excision</keyword>
<keyword id="KW-0234">DNA repair</keyword>
<keyword id="KW-0267">Excision nuclease</keyword>
<keyword id="KW-0547">Nucleotide-binding</keyword>
<keyword id="KW-1185">Reference proteome</keyword>
<keyword id="KW-0742">SOS response</keyword>
<accession>Q7TV80</accession>
<gene>
    <name evidence="1" type="primary">uvrB</name>
    <name type="ordered locus">PMT_0071</name>
</gene>
<dbReference type="EMBL" id="BX548175">
    <property type="protein sequence ID" value="CAE20246.1"/>
    <property type="molecule type" value="Genomic_DNA"/>
</dbReference>
<dbReference type="RefSeq" id="WP_011129450.1">
    <property type="nucleotide sequence ID" value="NC_005071.1"/>
</dbReference>
<dbReference type="SMR" id="Q7TV80"/>
<dbReference type="KEGG" id="pmt:PMT_0071"/>
<dbReference type="eggNOG" id="COG0556">
    <property type="taxonomic scope" value="Bacteria"/>
</dbReference>
<dbReference type="HOGENOM" id="CLU_009621_2_1_3"/>
<dbReference type="OrthoDB" id="9806651at2"/>
<dbReference type="Proteomes" id="UP000001423">
    <property type="component" value="Chromosome"/>
</dbReference>
<dbReference type="GO" id="GO:0005737">
    <property type="term" value="C:cytoplasm"/>
    <property type="evidence" value="ECO:0007669"/>
    <property type="project" value="UniProtKB-SubCell"/>
</dbReference>
<dbReference type="GO" id="GO:0009380">
    <property type="term" value="C:excinuclease repair complex"/>
    <property type="evidence" value="ECO:0007669"/>
    <property type="project" value="InterPro"/>
</dbReference>
<dbReference type="GO" id="GO:0005524">
    <property type="term" value="F:ATP binding"/>
    <property type="evidence" value="ECO:0007669"/>
    <property type="project" value="UniProtKB-UniRule"/>
</dbReference>
<dbReference type="GO" id="GO:0016887">
    <property type="term" value="F:ATP hydrolysis activity"/>
    <property type="evidence" value="ECO:0007669"/>
    <property type="project" value="InterPro"/>
</dbReference>
<dbReference type="GO" id="GO:0003677">
    <property type="term" value="F:DNA binding"/>
    <property type="evidence" value="ECO:0007669"/>
    <property type="project" value="UniProtKB-UniRule"/>
</dbReference>
<dbReference type="GO" id="GO:0009381">
    <property type="term" value="F:excinuclease ABC activity"/>
    <property type="evidence" value="ECO:0007669"/>
    <property type="project" value="UniProtKB-UniRule"/>
</dbReference>
<dbReference type="GO" id="GO:0006289">
    <property type="term" value="P:nucleotide-excision repair"/>
    <property type="evidence" value="ECO:0007669"/>
    <property type="project" value="UniProtKB-UniRule"/>
</dbReference>
<dbReference type="GO" id="GO:0009432">
    <property type="term" value="P:SOS response"/>
    <property type="evidence" value="ECO:0007669"/>
    <property type="project" value="UniProtKB-UniRule"/>
</dbReference>
<dbReference type="CDD" id="cd17916">
    <property type="entry name" value="DEXHc_UvrB"/>
    <property type="match status" value="1"/>
</dbReference>
<dbReference type="CDD" id="cd18790">
    <property type="entry name" value="SF2_C_UvrB"/>
    <property type="match status" value="1"/>
</dbReference>
<dbReference type="Gene3D" id="3.40.50.300">
    <property type="entry name" value="P-loop containing nucleotide triphosphate hydrolases"/>
    <property type="match status" value="3"/>
</dbReference>
<dbReference type="Gene3D" id="4.10.860.10">
    <property type="entry name" value="UVR domain"/>
    <property type="match status" value="1"/>
</dbReference>
<dbReference type="HAMAP" id="MF_00204">
    <property type="entry name" value="UvrB"/>
    <property type="match status" value="1"/>
</dbReference>
<dbReference type="InterPro" id="IPR006935">
    <property type="entry name" value="Helicase/UvrB_N"/>
</dbReference>
<dbReference type="InterPro" id="IPR014001">
    <property type="entry name" value="Helicase_ATP-bd"/>
</dbReference>
<dbReference type="InterPro" id="IPR001650">
    <property type="entry name" value="Helicase_C-like"/>
</dbReference>
<dbReference type="InterPro" id="IPR027417">
    <property type="entry name" value="P-loop_NTPase"/>
</dbReference>
<dbReference type="InterPro" id="IPR001943">
    <property type="entry name" value="UVR_dom"/>
</dbReference>
<dbReference type="InterPro" id="IPR036876">
    <property type="entry name" value="UVR_dom_sf"/>
</dbReference>
<dbReference type="InterPro" id="IPR004807">
    <property type="entry name" value="UvrB"/>
</dbReference>
<dbReference type="InterPro" id="IPR041471">
    <property type="entry name" value="UvrB_inter"/>
</dbReference>
<dbReference type="InterPro" id="IPR024759">
    <property type="entry name" value="UvrB_YAD/RRR_dom"/>
</dbReference>
<dbReference type="NCBIfam" id="NF003673">
    <property type="entry name" value="PRK05298.1"/>
    <property type="match status" value="1"/>
</dbReference>
<dbReference type="NCBIfam" id="TIGR00631">
    <property type="entry name" value="uvrb"/>
    <property type="match status" value="1"/>
</dbReference>
<dbReference type="PANTHER" id="PTHR24029">
    <property type="entry name" value="UVRABC SYSTEM PROTEIN B"/>
    <property type="match status" value="1"/>
</dbReference>
<dbReference type="PANTHER" id="PTHR24029:SF0">
    <property type="entry name" value="UVRABC SYSTEM PROTEIN B"/>
    <property type="match status" value="1"/>
</dbReference>
<dbReference type="Pfam" id="PF00271">
    <property type="entry name" value="Helicase_C"/>
    <property type="match status" value="1"/>
</dbReference>
<dbReference type="Pfam" id="PF04851">
    <property type="entry name" value="ResIII"/>
    <property type="match status" value="1"/>
</dbReference>
<dbReference type="Pfam" id="PF02151">
    <property type="entry name" value="UVR"/>
    <property type="match status" value="1"/>
</dbReference>
<dbReference type="Pfam" id="PF12344">
    <property type="entry name" value="UvrB"/>
    <property type="match status" value="1"/>
</dbReference>
<dbReference type="Pfam" id="PF17757">
    <property type="entry name" value="UvrB_inter"/>
    <property type="match status" value="1"/>
</dbReference>
<dbReference type="SMART" id="SM00487">
    <property type="entry name" value="DEXDc"/>
    <property type="match status" value="1"/>
</dbReference>
<dbReference type="SMART" id="SM00490">
    <property type="entry name" value="HELICc"/>
    <property type="match status" value="1"/>
</dbReference>
<dbReference type="SUPFAM" id="SSF46600">
    <property type="entry name" value="C-terminal UvrC-binding domain of UvrB"/>
    <property type="match status" value="1"/>
</dbReference>
<dbReference type="SUPFAM" id="SSF52540">
    <property type="entry name" value="P-loop containing nucleoside triphosphate hydrolases"/>
    <property type="match status" value="2"/>
</dbReference>
<dbReference type="PROSITE" id="PS51192">
    <property type="entry name" value="HELICASE_ATP_BIND_1"/>
    <property type="match status" value="1"/>
</dbReference>
<dbReference type="PROSITE" id="PS51194">
    <property type="entry name" value="HELICASE_CTER"/>
    <property type="match status" value="1"/>
</dbReference>
<dbReference type="PROSITE" id="PS50151">
    <property type="entry name" value="UVR"/>
    <property type="match status" value="1"/>
</dbReference>
<feature type="chain" id="PRO_0000227342" description="UvrABC system protein B">
    <location>
        <begin position="1"/>
        <end position="679"/>
    </location>
</feature>
<feature type="domain" description="Helicase ATP-binding" evidence="1">
    <location>
        <begin position="25"/>
        <end position="412"/>
    </location>
</feature>
<feature type="domain" description="Helicase C-terminal" evidence="1">
    <location>
        <begin position="429"/>
        <end position="591"/>
    </location>
</feature>
<feature type="domain" description="UVR" evidence="1">
    <location>
        <begin position="639"/>
        <end position="674"/>
    </location>
</feature>
<feature type="short sequence motif" description="Beta-hairpin">
    <location>
        <begin position="91"/>
        <end position="114"/>
    </location>
</feature>
<feature type="binding site" evidence="1">
    <location>
        <begin position="38"/>
        <end position="45"/>
    </location>
    <ligand>
        <name>ATP</name>
        <dbReference type="ChEBI" id="CHEBI:30616"/>
    </ligand>
</feature>
<organism>
    <name type="scientific">Prochlorococcus marinus (strain MIT 9313)</name>
    <dbReference type="NCBI Taxonomy" id="74547"/>
    <lineage>
        <taxon>Bacteria</taxon>
        <taxon>Bacillati</taxon>
        <taxon>Cyanobacteriota</taxon>
        <taxon>Cyanophyceae</taxon>
        <taxon>Synechococcales</taxon>
        <taxon>Prochlorococcaceae</taxon>
        <taxon>Prochlorococcus</taxon>
    </lineage>
</organism>
<comment type="function">
    <text evidence="1">The UvrABC repair system catalyzes the recognition and processing of DNA lesions. A damage recognition complex composed of 2 UvrA and 2 UvrB subunits scans DNA for abnormalities. Upon binding of the UvrA(2)B(2) complex to a putative damaged site, the DNA wraps around one UvrB monomer. DNA wrap is dependent on ATP binding by UvrB and probably causes local melting of the DNA helix, facilitating insertion of UvrB beta-hairpin between the DNA strands. Then UvrB probes one DNA strand for the presence of a lesion. If a lesion is found the UvrA subunits dissociate and the UvrB-DNA preincision complex is formed. This complex is subsequently bound by UvrC and the second UvrB is released. If no lesion is found, the DNA wraps around the other UvrB subunit that will check the other stand for damage.</text>
</comment>
<comment type="subunit">
    <text evidence="1">Forms a heterotetramer with UvrA during the search for lesions. Interacts with UvrC in an incision complex.</text>
</comment>
<comment type="subcellular location">
    <subcellularLocation>
        <location evidence="1">Cytoplasm</location>
    </subcellularLocation>
</comment>
<comment type="domain">
    <text evidence="1">The beta-hairpin motif is involved in DNA binding.</text>
</comment>
<comment type="similarity">
    <text evidence="1">Belongs to the UvrB family.</text>
</comment>
<protein>
    <recommendedName>
        <fullName evidence="1">UvrABC system protein B</fullName>
        <shortName evidence="1">Protein UvrB</shortName>
    </recommendedName>
    <alternativeName>
        <fullName evidence="1">Excinuclease ABC subunit B</fullName>
    </alternativeName>
</protein>
<name>UVRB_PROMM</name>
<proteinExistence type="inferred from homology"/>
<evidence type="ECO:0000255" key="1">
    <source>
        <dbReference type="HAMAP-Rule" id="MF_00204"/>
    </source>
</evidence>